<proteinExistence type="evidence at transcript level"/>
<evidence type="ECO:0000250" key="1">
    <source>
        <dbReference type="UniProtKB" id="P64596"/>
    </source>
</evidence>
<evidence type="ECO:0000255" key="2">
    <source>
        <dbReference type="PROSITE-ProRule" id="PRU00229"/>
    </source>
</evidence>
<evidence type="ECO:0000255" key="3">
    <source>
        <dbReference type="PROSITE-ProRule" id="PRU00303"/>
    </source>
</evidence>
<evidence type="ECO:0000269" key="4">
    <source>
    </source>
</evidence>
<evidence type="ECO:0000303" key="5">
    <source>
    </source>
</evidence>
<evidence type="ECO:0000305" key="6"/>
<evidence type="ECO:0000305" key="7">
    <source>
    </source>
</evidence>
<evidence type="ECO:0000312" key="8">
    <source>
        <dbReference type="EMBL" id="AAL22139.1"/>
    </source>
</evidence>
<feature type="signal peptide" evidence="3">
    <location>
        <begin position="1"/>
        <end position="18"/>
    </location>
</feature>
<feature type="chain" id="PRO_5004287409" description="Outer membrane lipoprotein DolP">
    <location>
        <begin position="19"/>
        <end position="191"/>
    </location>
</feature>
<feature type="domain" description="BON 1" evidence="2">
    <location>
        <begin position="46"/>
        <end position="115"/>
    </location>
</feature>
<feature type="domain" description="BON 2" evidence="2">
    <location>
        <begin position="124"/>
        <end position="191"/>
    </location>
</feature>
<feature type="lipid moiety-binding region" description="N-palmitoyl cysteine" evidence="3">
    <location>
        <position position="19"/>
    </location>
</feature>
<feature type="lipid moiety-binding region" description="S-diacylglycerol cysteine" evidence="3">
    <location>
        <position position="19"/>
    </location>
</feature>
<gene>
    <name evidence="1" type="primary">dolP</name>
    <name evidence="5" type="synonym">yraP</name>
    <name evidence="8" type="ordered locus">STM3267</name>
</gene>
<name>DOLP_SALTY</name>
<organism>
    <name type="scientific">Salmonella typhimurium (strain LT2 / SGSC1412 / ATCC 700720)</name>
    <dbReference type="NCBI Taxonomy" id="99287"/>
    <lineage>
        <taxon>Bacteria</taxon>
        <taxon>Pseudomonadati</taxon>
        <taxon>Pseudomonadota</taxon>
        <taxon>Gammaproteobacteria</taxon>
        <taxon>Enterobacterales</taxon>
        <taxon>Enterobacteriaceae</taxon>
        <taxon>Salmonella</taxon>
    </lineage>
</organism>
<reference key="1">
    <citation type="journal article" date="2001" name="Nature">
        <title>Complete genome sequence of Salmonella enterica serovar Typhimurium LT2.</title>
        <authorList>
            <person name="McClelland M."/>
            <person name="Sanderson K.E."/>
            <person name="Spieth J."/>
            <person name="Clifton S.W."/>
            <person name="Latreille P."/>
            <person name="Courtney L."/>
            <person name="Porwollik S."/>
            <person name="Ali J."/>
            <person name="Dante M."/>
            <person name="Du F."/>
            <person name="Hou S."/>
            <person name="Layman D."/>
            <person name="Leonard S."/>
            <person name="Nguyen C."/>
            <person name="Scott K."/>
            <person name="Holmes A."/>
            <person name="Grewal N."/>
            <person name="Mulvaney E."/>
            <person name="Ryan E."/>
            <person name="Sun H."/>
            <person name="Florea L."/>
            <person name="Miller W."/>
            <person name="Stoneking T."/>
            <person name="Nhan M."/>
            <person name="Waterston R."/>
            <person name="Wilson R.K."/>
        </authorList>
    </citation>
    <scope>NUCLEOTIDE SEQUENCE [LARGE SCALE GENOMIC DNA]</scope>
    <source>
        <strain>LT2 / SGSC1412 / ATCC 700720</strain>
    </source>
</reference>
<reference key="2">
    <citation type="journal article" date="2018" name="Infect. Immun.">
        <title>YraP contributes to cell envelope integrity and virulence of Salmonella enterica serovar typhimurium.</title>
        <authorList>
            <person name="Morris F.C."/>
            <person name="Wells T.J."/>
            <person name="Bryant J.A."/>
            <person name="Schager A.E."/>
            <person name="Sevastsyanovich Y.R."/>
            <person name="Squire D.J.P."/>
            <person name="Marshall J."/>
            <person name="Isom G.L."/>
            <person name="Rooke J."/>
            <person name="Maderbocus R."/>
            <person name="Knowles T.J."/>
            <person name="Overduin M."/>
            <person name="Rossiter A.E."/>
            <person name="Cunningham A.F."/>
            <person name="Henderson I.R."/>
        </authorList>
    </citation>
    <scope>FUNCTION</scope>
    <scope>SUBCELLULAR LOCATION</scope>
    <scope>INDUCTION</scope>
    <scope>DISRUPTION PHENOTYPE</scope>
    <source>
        <strain>SL1344</strain>
    </source>
</reference>
<comment type="function">
    <text evidence="4">Plays an important role in maintaining outer membrane integrity (PubMed:30201701). Contributes to virulence (PubMed:30201701).</text>
</comment>
<comment type="subcellular location">
    <subcellularLocation>
        <location evidence="4">Cell outer membrane</location>
        <topology evidence="3">Lipid-anchor</topology>
        <orientation evidence="1">Periplasmic side</orientation>
    </subcellularLocation>
</comment>
<comment type="induction">
    <text evidence="7">Transcriptionally regulated by sigma-E factor.</text>
</comment>
<comment type="disruption phenotype">
    <text evidence="4">Disruption of the gene results in a defective outer membrane barrier with elevated sensitivity to a range of compounds (PubMed:30201701). Mutant shows attenuated virulence in an oral infection model and during the early stages of systemic infection (PubMed:30201701). Loss of the gene does not have a global effect on outer membrane proteins, lipopolysaccharide or lipoprotein production, and does not impact adhesion, invasion or intracellular survival (PubMed:30201701).</text>
</comment>
<comment type="similarity">
    <text evidence="6">Belongs to the lipoprotein DolP family.</text>
</comment>
<accession>Q7CPQ6</accession>
<protein>
    <recommendedName>
        <fullName evidence="6">Outer membrane lipoprotein DolP</fullName>
    </recommendedName>
</protein>
<dbReference type="EMBL" id="AE006468">
    <property type="protein sequence ID" value="AAL22139.1"/>
    <property type="molecule type" value="Genomic_DNA"/>
</dbReference>
<dbReference type="RefSeq" id="NP_462180.1">
    <property type="nucleotide sequence ID" value="NC_003197.2"/>
</dbReference>
<dbReference type="RefSeq" id="WP_000643280.1">
    <property type="nucleotide sequence ID" value="NC_003197.2"/>
</dbReference>
<dbReference type="SMR" id="Q7CPQ6"/>
<dbReference type="STRING" id="99287.STM3267"/>
<dbReference type="PaxDb" id="99287-STM3267"/>
<dbReference type="GeneID" id="1254790"/>
<dbReference type="KEGG" id="stm:STM3267"/>
<dbReference type="PATRIC" id="fig|99287.12.peg.3466"/>
<dbReference type="HOGENOM" id="CLU_083606_3_0_6"/>
<dbReference type="OMA" id="TSYNRQV"/>
<dbReference type="PhylomeDB" id="Q7CPQ6"/>
<dbReference type="BioCyc" id="SENT99287:STM3267-MONOMER"/>
<dbReference type="Proteomes" id="UP000001014">
    <property type="component" value="Chromosome"/>
</dbReference>
<dbReference type="GO" id="GO:0009279">
    <property type="term" value="C:cell outer membrane"/>
    <property type="evidence" value="ECO:0007669"/>
    <property type="project" value="UniProtKB-SubCell"/>
</dbReference>
<dbReference type="Gene3D" id="3.30.1340.30">
    <property type="match status" value="1"/>
</dbReference>
<dbReference type="InterPro" id="IPR007055">
    <property type="entry name" value="BON_dom"/>
</dbReference>
<dbReference type="InterPro" id="IPR051686">
    <property type="entry name" value="Lipoprotein_DolP"/>
</dbReference>
<dbReference type="InterPro" id="IPR014004">
    <property type="entry name" value="Transpt-assoc_nodulatn_dom_bac"/>
</dbReference>
<dbReference type="NCBIfam" id="NF008247">
    <property type="entry name" value="PRK11023.1"/>
    <property type="match status" value="1"/>
</dbReference>
<dbReference type="PANTHER" id="PTHR34606">
    <property type="entry name" value="BON DOMAIN-CONTAINING PROTEIN"/>
    <property type="match status" value="1"/>
</dbReference>
<dbReference type="PANTHER" id="PTHR34606:SF4">
    <property type="entry name" value="OUTER MEMBRANE LIPOPROTEIN DOLP"/>
    <property type="match status" value="1"/>
</dbReference>
<dbReference type="Pfam" id="PF04972">
    <property type="entry name" value="BON"/>
    <property type="match status" value="2"/>
</dbReference>
<dbReference type="SMART" id="SM00749">
    <property type="entry name" value="BON"/>
    <property type="match status" value="2"/>
</dbReference>
<dbReference type="PROSITE" id="PS50914">
    <property type="entry name" value="BON"/>
    <property type="match status" value="2"/>
</dbReference>
<dbReference type="PROSITE" id="PS51257">
    <property type="entry name" value="PROKAR_LIPOPROTEIN"/>
    <property type="match status" value="1"/>
</dbReference>
<keyword id="KW-0998">Cell outer membrane</keyword>
<keyword id="KW-0449">Lipoprotein</keyword>
<keyword id="KW-0472">Membrane</keyword>
<keyword id="KW-0564">Palmitate</keyword>
<keyword id="KW-1185">Reference proteome</keyword>
<keyword id="KW-0732">Signal</keyword>
<keyword id="KW-0843">Virulence</keyword>
<sequence>MKAFSPLAVLISALLLQGCVAAAVVGTAAVGTKAATDPRSVGTQVDDGTLELRVSSALSKDEQIKKETRINVTAYQGKVLLVGQSPNSELSARAKQIAMGVEGTTEVYNEIRQGQPIGLGTASNDTWITTKVRSQLLTSDQVKSSNVKVTTENGEVFLLGLVTEREGKAAADIASRVSGVKRVTTAFTYIK</sequence>